<proteinExistence type="inferred from homology"/>
<accession>C3N0R9</accession>
<protein>
    <recommendedName>
        <fullName evidence="1">GMP synthase [glutamine-hydrolyzing] subunit B</fullName>
        <ecNumber evidence="1">6.3.5.2</ecNumber>
    </recommendedName>
    <alternativeName>
        <fullName evidence="1">GMP synthetase</fullName>
    </alternativeName>
</protein>
<name>GUAAB_SACI3</name>
<sequence>MFDPASFVKEIGPQLKQKVGNERVLAAVSGGVDSTTAAVLAYNLLGNKVIPVLIDTGFLRKNEAEKIKAYLSNVLPNLIVVDERETFTSEIEGMEEAEAKRKKFRELFYSSISSLMRKFNAKYLMQGTIAADWVETQGGIKTQHNVLVQIGIDTEKEWGFTLIEPLADLYKNEVRELARYLKLPKEISERQPFPGPGLLVRTIGKLTREKLEVVREANDIVEKYLDPFNYSQYFAVSFESDGNFVILDGIDAFLYKARATGVKGDVRAYGNIAKVECSDINAAKSFVDTLVKYDITHVLCSLDERSNGKYSIAIRAVITEDFMTADYARIPKEVLEKISSEILQKIPNVKEVLYDVTSKPPATIEFE</sequence>
<dbReference type="EC" id="6.3.5.2" evidence="1"/>
<dbReference type="EMBL" id="CP001401">
    <property type="protein sequence ID" value="ACP56077.1"/>
    <property type="molecule type" value="Genomic_DNA"/>
</dbReference>
<dbReference type="RefSeq" id="WP_012712098.1">
    <property type="nucleotide sequence ID" value="NC_012632.1"/>
</dbReference>
<dbReference type="SMR" id="C3N0R9"/>
<dbReference type="KEGG" id="sim:M1627_2214"/>
<dbReference type="HOGENOM" id="CLU_014340_0_0_2"/>
<dbReference type="UniPathway" id="UPA00189">
    <property type="reaction ID" value="UER00296"/>
</dbReference>
<dbReference type="Proteomes" id="UP000002307">
    <property type="component" value="Chromosome"/>
</dbReference>
<dbReference type="GO" id="GO:0005829">
    <property type="term" value="C:cytosol"/>
    <property type="evidence" value="ECO:0007669"/>
    <property type="project" value="TreeGrafter"/>
</dbReference>
<dbReference type="GO" id="GO:0005524">
    <property type="term" value="F:ATP binding"/>
    <property type="evidence" value="ECO:0007669"/>
    <property type="project" value="UniProtKB-UniRule"/>
</dbReference>
<dbReference type="GO" id="GO:0003921">
    <property type="term" value="F:GMP synthase activity"/>
    <property type="evidence" value="ECO:0007669"/>
    <property type="project" value="InterPro"/>
</dbReference>
<dbReference type="CDD" id="cd01997">
    <property type="entry name" value="GMP_synthase_C"/>
    <property type="match status" value="1"/>
</dbReference>
<dbReference type="Gene3D" id="3.30.300.10">
    <property type="match status" value="2"/>
</dbReference>
<dbReference type="Gene3D" id="3.40.50.620">
    <property type="entry name" value="HUPs"/>
    <property type="match status" value="1"/>
</dbReference>
<dbReference type="HAMAP" id="MF_00345">
    <property type="entry name" value="GMP_synthase_B"/>
    <property type="match status" value="1"/>
</dbReference>
<dbReference type="InterPro" id="IPR001674">
    <property type="entry name" value="GMP_synth_C"/>
</dbReference>
<dbReference type="InterPro" id="IPR026598">
    <property type="entry name" value="GMP_synthase_B"/>
</dbReference>
<dbReference type="InterPro" id="IPR025777">
    <property type="entry name" value="GMPS_ATP_PPase_dom"/>
</dbReference>
<dbReference type="InterPro" id="IPR022310">
    <property type="entry name" value="NAD/GMP_synthase"/>
</dbReference>
<dbReference type="InterPro" id="IPR014729">
    <property type="entry name" value="Rossmann-like_a/b/a_fold"/>
</dbReference>
<dbReference type="PANTHER" id="PTHR11922:SF2">
    <property type="entry name" value="GMP SYNTHASE [GLUTAMINE-HYDROLYZING]"/>
    <property type="match status" value="1"/>
</dbReference>
<dbReference type="PANTHER" id="PTHR11922">
    <property type="entry name" value="GMP SYNTHASE-RELATED"/>
    <property type="match status" value="1"/>
</dbReference>
<dbReference type="Pfam" id="PF00958">
    <property type="entry name" value="GMP_synt_C"/>
    <property type="match status" value="1"/>
</dbReference>
<dbReference type="Pfam" id="PF02540">
    <property type="entry name" value="NAD_synthase"/>
    <property type="match status" value="1"/>
</dbReference>
<dbReference type="SUPFAM" id="SSF52402">
    <property type="entry name" value="Adenine nucleotide alpha hydrolases-like"/>
    <property type="match status" value="1"/>
</dbReference>
<dbReference type="SUPFAM" id="SSF54810">
    <property type="entry name" value="GMP synthetase C-terminal dimerisation domain"/>
    <property type="match status" value="1"/>
</dbReference>
<dbReference type="PROSITE" id="PS51553">
    <property type="entry name" value="GMPS_ATP_PPASE"/>
    <property type="match status" value="1"/>
</dbReference>
<reference key="1">
    <citation type="journal article" date="2009" name="Proc. Natl. Acad. Sci. U.S.A.">
        <title>Biogeography of the Sulfolobus islandicus pan-genome.</title>
        <authorList>
            <person name="Reno M.L."/>
            <person name="Held N.L."/>
            <person name="Fields C.J."/>
            <person name="Burke P.V."/>
            <person name="Whitaker R.J."/>
        </authorList>
    </citation>
    <scope>NUCLEOTIDE SEQUENCE [LARGE SCALE GENOMIC DNA]</scope>
    <source>
        <strain>M.16.27</strain>
    </source>
</reference>
<organism>
    <name type="scientific">Saccharolobus islandicus (strain M.16.27)</name>
    <name type="common">Sulfolobus islandicus</name>
    <dbReference type="NCBI Taxonomy" id="427318"/>
    <lineage>
        <taxon>Archaea</taxon>
        <taxon>Thermoproteota</taxon>
        <taxon>Thermoprotei</taxon>
        <taxon>Sulfolobales</taxon>
        <taxon>Sulfolobaceae</taxon>
        <taxon>Saccharolobus</taxon>
    </lineage>
</organism>
<keyword id="KW-0067">ATP-binding</keyword>
<keyword id="KW-0332">GMP biosynthesis</keyword>
<keyword id="KW-0436">Ligase</keyword>
<keyword id="KW-0547">Nucleotide-binding</keyword>
<keyword id="KW-0658">Purine biosynthesis</keyword>
<comment type="function">
    <text evidence="1">Catalyzes the synthesis of GMP from XMP.</text>
</comment>
<comment type="catalytic activity">
    <reaction evidence="1">
        <text>XMP + L-glutamine + ATP + H2O = GMP + L-glutamate + AMP + diphosphate + 2 H(+)</text>
        <dbReference type="Rhea" id="RHEA:11680"/>
        <dbReference type="ChEBI" id="CHEBI:15377"/>
        <dbReference type="ChEBI" id="CHEBI:15378"/>
        <dbReference type="ChEBI" id="CHEBI:29985"/>
        <dbReference type="ChEBI" id="CHEBI:30616"/>
        <dbReference type="ChEBI" id="CHEBI:33019"/>
        <dbReference type="ChEBI" id="CHEBI:57464"/>
        <dbReference type="ChEBI" id="CHEBI:58115"/>
        <dbReference type="ChEBI" id="CHEBI:58359"/>
        <dbReference type="ChEBI" id="CHEBI:456215"/>
        <dbReference type="EC" id="6.3.5.2"/>
    </reaction>
</comment>
<comment type="pathway">
    <text evidence="1">Purine metabolism; GMP biosynthesis; GMP from XMP (L-Gln route): step 1/1.</text>
</comment>
<comment type="subunit">
    <text evidence="1">Heterodimer composed of a glutamine amidotransferase subunit (A) and a GMP-binding subunit (B).</text>
</comment>
<evidence type="ECO:0000255" key="1">
    <source>
        <dbReference type="HAMAP-Rule" id="MF_00345"/>
    </source>
</evidence>
<feature type="chain" id="PRO_1000205314" description="GMP synthase [glutamine-hydrolyzing] subunit B">
    <location>
        <begin position="1"/>
        <end position="367"/>
    </location>
</feature>
<feature type="domain" description="GMPS ATP-PPase" evidence="1">
    <location>
        <begin position="2"/>
        <end position="190"/>
    </location>
</feature>
<feature type="binding site" evidence="1">
    <location>
        <begin position="29"/>
        <end position="35"/>
    </location>
    <ligand>
        <name>ATP</name>
        <dbReference type="ChEBI" id="CHEBI:30616"/>
    </ligand>
</feature>
<gene>
    <name evidence="1" type="primary">guaAB</name>
    <name type="ordered locus">M1627_2214</name>
</gene>